<proteinExistence type="inferred from homology"/>
<organism>
    <name type="scientific">Hyperthermus butylicus (strain DSM 5456 / JCM 9403 / PLM1-5)</name>
    <dbReference type="NCBI Taxonomy" id="415426"/>
    <lineage>
        <taxon>Archaea</taxon>
        <taxon>Thermoproteota</taxon>
        <taxon>Thermoprotei</taxon>
        <taxon>Desulfurococcales</taxon>
        <taxon>Pyrodictiaceae</taxon>
        <taxon>Hyperthermus</taxon>
    </lineage>
</organism>
<name>IF2A_HYPBU</name>
<evidence type="ECO:0000255" key="1">
    <source>
        <dbReference type="HAMAP-Rule" id="MF_00231"/>
    </source>
</evidence>
<reference key="1">
    <citation type="journal article" date="2007" name="Archaea">
        <title>The genome of Hyperthermus butylicus: a sulfur-reducing, peptide fermenting, neutrophilic Crenarchaeote growing up to 108 degrees C.</title>
        <authorList>
            <person name="Bruegger K."/>
            <person name="Chen L."/>
            <person name="Stark M."/>
            <person name="Zibat A."/>
            <person name="Redder P."/>
            <person name="Ruepp A."/>
            <person name="Awayez M."/>
            <person name="She Q."/>
            <person name="Garrett R.A."/>
            <person name="Klenk H.-P."/>
        </authorList>
    </citation>
    <scope>NUCLEOTIDE SEQUENCE [LARGE SCALE GENOMIC DNA]</scope>
    <source>
        <strain>DSM 5456 / JCM 9403 / PLM1-5</strain>
    </source>
</reference>
<comment type="function">
    <text evidence="1">eIF-2 functions in the early steps of protein synthesis by forming a ternary complex with GTP and initiator tRNA.</text>
</comment>
<comment type="subunit">
    <text evidence="1">Heterotrimer composed of an alpha, a beta and a gamma chain.</text>
</comment>
<comment type="similarity">
    <text evidence="1">Belongs to the eIF-2-alpha family.</text>
</comment>
<accession>A2BN93</accession>
<dbReference type="EMBL" id="CP000493">
    <property type="protein sequence ID" value="ABM81454.1"/>
    <property type="molecule type" value="Genomic_DNA"/>
</dbReference>
<dbReference type="RefSeq" id="WP_011822772.1">
    <property type="nucleotide sequence ID" value="NC_008818.1"/>
</dbReference>
<dbReference type="SMR" id="A2BN93"/>
<dbReference type="STRING" id="415426.Hbut_1640"/>
<dbReference type="EnsemblBacteria" id="ABM81454">
    <property type="protein sequence ID" value="ABM81454"/>
    <property type="gene ID" value="Hbut_1640"/>
</dbReference>
<dbReference type="GeneID" id="4782352"/>
<dbReference type="KEGG" id="hbu:Hbut_1640"/>
<dbReference type="eggNOG" id="arCOG04107">
    <property type="taxonomic scope" value="Archaea"/>
</dbReference>
<dbReference type="HOGENOM" id="CLU_033458_0_2_2"/>
<dbReference type="OrthoDB" id="84794at2157"/>
<dbReference type="Proteomes" id="UP000002593">
    <property type="component" value="Chromosome"/>
</dbReference>
<dbReference type="GO" id="GO:0043022">
    <property type="term" value="F:ribosome binding"/>
    <property type="evidence" value="ECO:0007669"/>
    <property type="project" value="TreeGrafter"/>
</dbReference>
<dbReference type="GO" id="GO:0003723">
    <property type="term" value="F:RNA binding"/>
    <property type="evidence" value="ECO:0007669"/>
    <property type="project" value="UniProtKB-UniRule"/>
</dbReference>
<dbReference type="GO" id="GO:0003743">
    <property type="term" value="F:translation initiation factor activity"/>
    <property type="evidence" value="ECO:0007669"/>
    <property type="project" value="UniProtKB-UniRule"/>
</dbReference>
<dbReference type="CDD" id="cd04452">
    <property type="entry name" value="S1_IF2_alpha"/>
    <property type="match status" value="1"/>
</dbReference>
<dbReference type="FunFam" id="2.40.50.140:FF:000015">
    <property type="entry name" value="Eukaryotic translation initiation factor 2 subunit alpha"/>
    <property type="match status" value="1"/>
</dbReference>
<dbReference type="Gene3D" id="3.30.70.1130">
    <property type="entry name" value="EIF_2_alpha"/>
    <property type="match status" value="1"/>
</dbReference>
<dbReference type="Gene3D" id="2.40.50.140">
    <property type="entry name" value="Nucleic acid-binding proteins"/>
    <property type="match status" value="1"/>
</dbReference>
<dbReference type="Gene3D" id="1.10.150.190">
    <property type="entry name" value="Translation initiation factor 2, subunit 1, domain 2"/>
    <property type="match status" value="1"/>
</dbReference>
<dbReference type="HAMAP" id="MF_00231">
    <property type="entry name" value="eIF_2_alpha"/>
    <property type="match status" value="1"/>
</dbReference>
<dbReference type="InterPro" id="IPR012340">
    <property type="entry name" value="NA-bd_OB-fold"/>
</dbReference>
<dbReference type="InterPro" id="IPR003029">
    <property type="entry name" value="S1_domain"/>
</dbReference>
<dbReference type="InterPro" id="IPR044126">
    <property type="entry name" value="S1_IF2_alpha"/>
</dbReference>
<dbReference type="InterPro" id="IPR022964">
    <property type="entry name" value="TIF2_asu_arc"/>
</dbReference>
<dbReference type="InterPro" id="IPR024055">
    <property type="entry name" value="TIF2_asu_C"/>
</dbReference>
<dbReference type="InterPro" id="IPR024054">
    <property type="entry name" value="TIF2_asu_middle_sf"/>
</dbReference>
<dbReference type="InterPro" id="IPR011488">
    <property type="entry name" value="TIF_2_asu"/>
</dbReference>
<dbReference type="NCBIfam" id="NF003062">
    <property type="entry name" value="PRK03987.1-1"/>
    <property type="match status" value="1"/>
</dbReference>
<dbReference type="NCBIfam" id="NF003064">
    <property type="entry name" value="PRK03987.1-4"/>
    <property type="match status" value="1"/>
</dbReference>
<dbReference type="PANTHER" id="PTHR10602">
    <property type="entry name" value="EUKARYOTIC TRANSLATION INITIATION FACTOR 2 SUBUNIT 1"/>
    <property type="match status" value="1"/>
</dbReference>
<dbReference type="PANTHER" id="PTHR10602:SF0">
    <property type="entry name" value="EUKARYOTIC TRANSLATION INITIATION FACTOR 2 SUBUNIT 1"/>
    <property type="match status" value="1"/>
</dbReference>
<dbReference type="Pfam" id="PF07541">
    <property type="entry name" value="EIF_2_alpha"/>
    <property type="match status" value="1"/>
</dbReference>
<dbReference type="Pfam" id="PF00575">
    <property type="entry name" value="S1"/>
    <property type="match status" value="1"/>
</dbReference>
<dbReference type="SMART" id="SM00316">
    <property type="entry name" value="S1"/>
    <property type="match status" value="1"/>
</dbReference>
<dbReference type="SUPFAM" id="SSF110993">
    <property type="entry name" value="eIF-2-alpha, C-terminal domain"/>
    <property type="match status" value="1"/>
</dbReference>
<dbReference type="SUPFAM" id="SSF116742">
    <property type="entry name" value="eIF2alpha middle domain-like"/>
    <property type="match status" value="1"/>
</dbReference>
<dbReference type="SUPFAM" id="SSF50249">
    <property type="entry name" value="Nucleic acid-binding proteins"/>
    <property type="match status" value="1"/>
</dbReference>
<dbReference type="PROSITE" id="PS50126">
    <property type="entry name" value="S1"/>
    <property type="match status" value="1"/>
</dbReference>
<keyword id="KW-0396">Initiation factor</keyword>
<keyword id="KW-0648">Protein biosynthesis</keyword>
<keyword id="KW-1185">Reference proteome</keyword>
<keyword id="KW-0694">RNA-binding</keyword>
<gene>
    <name evidence="1" type="primary">eif2a</name>
    <name type="ordered locus">Hbut_1640</name>
</gene>
<sequence>MPIQRKELPDVGELVVATVKEVYDYGAYLTLDEYGGLEAYLPWSEVASRWVRSIHDVVKPGQKIVVKVIRVNKRKKQVDVSLKRVTDSERRRKMMEWKRAQKAERILELVAQKLGKSLEEAYEAVGKKLEDYYGELMAAFEEVVIRGEQALREAGVPEEWVQPLLEEIKRHVEVKRVKIAGVLTVRSLAGDGIERVKKVLLTVKDAIENSSPDIKVKLYTVGAPRYRLELEAYDYKTLEKALAKALEEGEETAKSLGVEFSFTREKQ</sequence>
<protein>
    <recommendedName>
        <fullName evidence="1">Translation initiation factor 2 subunit alpha</fullName>
    </recommendedName>
    <alternativeName>
        <fullName evidence="1">aIF2-alpha</fullName>
    </alternativeName>
    <alternativeName>
        <fullName evidence="1">eIF-2-alpha</fullName>
    </alternativeName>
</protein>
<feature type="chain" id="PRO_1000021644" description="Translation initiation factor 2 subunit alpha">
    <location>
        <begin position="1"/>
        <end position="267"/>
    </location>
</feature>
<feature type="domain" description="S1 motif" evidence="1">
    <location>
        <begin position="12"/>
        <end position="83"/>
    </location>
</feature>